<accession>B9SCX0</accession>
<comment type="function">
    <text evidence="1">Regulates membrane-cell wall junctions and localized cell wall deposition. Required for establishment of the Casparian strip membrane domain (CSD) and the subsequent formation of Casparian strips, a cell wall modification of the root endodermis that determines an apoplastic barrier between the intraorganismal apoplasm and the extraorganismal apoplasm and prevents lateral diffusion (By similarity).</text>
</comment>
<comment type="subunit">
    <text evidence="1">Homodimer and heterodimers.</text>
</comment>
<comment type="subcellular location">
    <subcellularLocation>
        <location evidence="1">Cell membrane</location>
        <topology evidence="1">Multi-pass membrane protein</topology>
    </subcellularLocation>
    <text evidence="1">Very restricted localization following a belt shape within the plasma membrane which coincides with the position of the Casparian strip membrane domain in the root endodermis.</text>
</comment>
<comment type="similarity">
    <text evidence="4">Belongs to the Casparian strip membrane proteins (CASP) family.</text>
</comment>
<reference key="1">
    <citation type="journal article" date="2010" name="Nat. Biotechnol.">
        <title>Draft genome sequence of the oilseed species Ricinus communis.</title>
        <authorList>
            <person name="Chan A.P."/>
            <person name="Crabtree J."/>
            <person name="Zhao Q."/>
            <person name="Lorenzi H."/>
            <person name="Orvis J."/>
            <person name="Puiu D."/>
            <person name="Melake-Berhan A."/>
            <person name="Jones K.M."/>
            <person name="Redman J."/>
            <person name="Chen G."/>
            <person name="Cahoon E.B."/>
            <person name="Gedil M."/>
            <person name="Stanke M."/>
            <person name="Haas B.J."/>
            <person name="Wortman J.R."/>
            <person name="Fraser-Liggett C.M."/>
            <person name="Ravel J."/>
            <person name="Rabinowicz P.D."/>
        </authorList>
    </citation>
    <scope>NUCLEOTIDE SEQUENCE [LARGE SCALE GENOMIC DNA]</scope>
    <source>
        <strain>cv. Hale</strain>
    </source>
</reference>
<reference key="2">
    <citation type="journal article" date="2014" name="Plant Physiol.">
        <title>Functional and evolutionary analysis of the CASPARIAN STRIP MEMBRANE DOMAIN PROTEIN family.</title>
        <authorList>
            <person name="Roppolo D."/>
            <person name="Boeckmann B."/>
            <person name="Pfister A."/>
            <person name="Boutet E."/>
            <person name="Rubio M.C."/>
            <person name="Denervaud-Tendon V."/>
            <person name="Vermeer J.E."/>
            <person name="Gheyselinck J."/>
            <person name="Xenarios I."/>
            <person name="Geldner N."/>
        </authorList>
    </citation>
    <scope>GENE FAMILY</scope>
    <scope>NOMENCLATURE</scope>
</reference>
<keyword id="KW-1003">Cell membrane</keyword>
<keyword id="KW-0961">Cell wall biogenesis/degradation</keyword>
<keyword id="KW-0472">Membrane</keyword>
<keyword id="KW-1185">Reference proteome</keyword>
<keyword id="KW-0812">Transmembrane</keyword>
<keyword id="KW-1133">Transmembrane helix</keyword>
<evidence type="ECO:0000250" key="1"/>
<evidence type="ECO:0000255" key="2"/>
<evidence type="ECO:0000256" key="3">
    <source>
        <dbReference type="SAM" id="MobiDB-lite"/>
    </source>
</evidence>
<evidence type="ECO:0000305" key="4"/>
<proteinExistence type="inferred from homology"/>
<dbReference type="EMBL" id="EQ973924">
    <property type="protein sequence ID" value="EEF38565.1"/>
    <property type="molecule type" value="Genomic_DNA"/>
</dbReference>
<dbReference type="SMR" id="B9SCX0"/>
<dbReference type="FunCoup" id="B9SCX0">
    <property type="interactions" value="100"/>
</dbReference>
<dbReference type="STRING" id="3988.B9SCX0"/>
<dbReference type="KEGG" id="rcu:8263304"/>
<dbReference type="eggNOG" id="ENOG502RXQU">
    <property type="taxonomic scope" value="Eukaryota"/>
</dbReference>
<dbReference type="InParanoid" id="B9SCX0"/>
<dbReference type="OMA" id="QWVAICQ"/>
<dbReference type="OrthoDB" id="753675at2759"/>
<dbReference type="Proteomes" id="UP000008311">
    <property type="component" value="Unassembled WGS sequence"/>
</dbReference>
<dbReference type="GO" id="GO:0048226">
    <property type="term" value="C:Casparian strip"/>
    <property type="evidence" value="ECO:0000318"/>
    <property type="project" value="GO_Central"/>
</dbReference>
<dbReference type="GO" id="GO:0005886">
    <property type="term" value="C:plasma membrane"/>
    <property type="evidence" value="ECO:0000318"/>
    <property type="project" value="GO_Central"/>
</dbReference>
<dbReference type="GO" id="GO:0042545">
    <property type="term" value="P:cell wall modification"/>
    <property type="evidence" value="ECO:0000318"/>
    <property type="project" value="GO_Central"/>
</dbReference>
<dbReference type="GO" id="GO:0007043">
    <property type="term" value="P:cell-cell junction assembly"/>
    <property type="evidence" value="ECO:0000318"/>
    <property type="project" value="GO_Central"/>
</dbReference>
<dbReference type="InterPro" id="IPR006459">
    <property type="entry name" value="CASP/CASPL"/>
</dbReference>
<dbReference type="InterPro" id="IPR006702">
    <property type="entry name" value="CASP_dom"/>
</dbReference>
<dbReference type="InterPro" id="IPR044173">
    <property type="entry name" value="CASPL"/>
</dbReference>
<dbReference type="NCBIfam" id="TIGR01569">
    <property type="entry name" value="A_tha_TIGR01569"/>
    <property type="match status" value="1"/>
</dbReference>
<dbReference type="PANTHER" id="PTHR36488:SF11">
    <property type="entry name" value="CASP-LIKE PROTEIN"/>
    <property type="match status" value="1"/>
</dbReference>
<dbReference type="PANTHER" id="PTHR36488">
    <property type="entry name" value="CASP-LIKE PROTEIN 1U1"/>
    <property type="match status" value="1"/>
</dbReference>
<dbReference type="Pfam" id="PF04535">
    <property type="entry name" value="CASP_dom"/>
    <property type="match status" value="1"/>
</dbReference>
<name>CASP3_RICCO</name>
<organism>
    <name type="scientific">Ricinus communis</name>
    <name type="common">Castor bean</name>
    <dbReference type="NCBI Taxonomy" id="3988"/>
    <lineage>
        <taxon>Eukaryota</taxon>
        <taxon>Viridiplantae</taxon>
        <taxon>Streptophyta</taxon>
        <taxon>Embryophyta</taxon>
        <taxon>Tracheophyta</taxon>
        <taxon>Spermatophyta</taxon>
        <taxon>Magnoliopsida</taxon>
        <taxon>eudicotyledons</taxon>
        <taxon>Gunneridae</taxon>
        <taxon>Pentapetalae</taxon>
        <taxon>rosids</taxon>
        <taxon>fabids</taxon>
        <taxon>Malpighiales</taxon>
        <taxon>Euphorbiaceae</taxon>
        <taxon>Acalyphoideae</taxon>
        <taxon>Acalypheae</taxon>
        <taxon>Ricinus</taxon>
    </lineage>
</organism>
<protein>
    <recommendedName>
        <fullName>Casparian strip membrane protein 3</fullName>
        <shortName>RcCASP3</shortName>
    </recommendedName>
</protein>
<sequence length="215" mass="23037">MDSEKTGEAKITIQEPKAADPKGKGIADAPPPPVVVTTAKAIQKLPRGGWKKGVAIFDFVVRLCAIATGLAATGIMGTTEQTLPFFTQFFQFHAEYNDLPTFMFFVFANGIASGYLILSLPFSIVCIVRPLAIVPRLLLIIFDTVVMALTIAAASAAAAIVYLAHNGNSNANWNAICQQFNDFCQQTSTAVVASFITAAMLTFLIVLSAFALKRN</sequence>
<gene>
    <name type="ORF">RCOM_1282030</name>
</gene>
<feature type="chain" id="PRO_0000376098" description="Casparian strip membrane protein 3">
    <location>
        <begin position="1"/>
        <end position="215"/>
    </location>
</feature>
<feature type="topological domain" description="Cytoplasmic" evidence="2">
    <location>
        <begin position="1"/>
        <end position="55"/>
    </location>
</feature>
<feature type="transmembrane region" description="Helical" evidence="2">
    <location>
        <begin position="56"/>
        <end position="76"/>
    </location>
</feature>
<feature type="topological domain" description="Extracellular" evidence="2">
    <location>
        <begin position="77"/>
        <end position="101"/>
    </location>
</feature>
<feature type="transmembrane region" description="Helical" evidence="2">
    <location>
        <begin position="102"/>
        <end position="122"/>
    </location>
</feature>
<feature type="topological domain" description="Cytoplasmic" evidence="2">
    <location>
        <begin position="123"/>
        <end position="136"/>
    </location>
</feature>
<feature type="transmembrane region" description="Helical" evidence="2">
    <location>
        <begin position="137"/>
        <end position="157"/>
    </location>
</feature>
<feature type="topological domain" description="Extracellular" evidence="2">
    <location>
        <begin position="158"/>
        <end position="189"/>
    </location>
</feature>
<feature type="transmembrane region" description="Helical" evidence="2">
    <location>
        <begin position="190"/>
        <end position="210"/>
    </location>
</feature>
<feature type="topological domain" description="Cytoplasmic" evidence="2">
    <location>
        <begin position="211"/>
        <end position="215"/>
    </location>
</feature>
<feature type="region of interest" description="Disordered" evidence="3">
    <location>
        <begin position="1"/>
        <end position="26"/>
    </location>
</feature>